<organism>
    <name type="scientific">Actinobacillus pleuropneumoniae</name>
    <name type="common">Haemophilus pleuropneumoniae</name>
    <dbReference type="NCBI Taxonomy" id="715"/>
    <lineage>
        <taxon>Bacteria</taxon>
        <taxon>Pseudomonadati</taxon>
        <taxon>Pseudomonadota</taxon>
        <taxon>Gammaproteobacteria</taxon>
        <taxon>Pasteurellales</taxon>
        <taxon>Pasteurellaceae</taxon>
        <taxon>Actinobacillus</taxon>
    </lineage>
</organism>
<name>UREG_ACTPL</name>
<gene>
    <name evidence="1" type="primary">ureG</name>
</gene>
<protein>
    <recommendedName>
        <fullName evidence="1">Urease accessory protein UreG</fullName>
    </recommendedName>
</protein>
<comment type="function">
    <text evidence="1">Facilitates the functional incorporation of the urease nickel metallocenter. This process requires GTP hydrolysis, probably effectuated by UreG.</text>
</comment>
<comment type="subunit">
    <text evidence="1">Homodimer. UreD, UreF and UreG form a complex that acts as a GTP-hydrolysis-dependent molecular chaperone, activating the urease apoprotein by helping to assemble the nickel containing metallocenter of UreC. The UreE protein probably delivers the nickel.</text>
</comment>
<comment type="subcellular location">
    <subcellularLocation>
        <location evidence="1">Cytoplasm</location>
    </subcellularLocation>
</comment>
<comment type="similarity">
    <text evidence="1">Belongs to the SIMIBI class G3E GTPase family. UreG subfamily.</text>
</comment>
<proteinExistence type="inferred from homology"/>
<accession>O54424</accession>
<keyword id="KW-0143">Chaperone</keyword>
<keyword id="KW-0963">Cytoplasm</keyword>
<keyword id="KW-0342">GTP-binding</keyword>
<keyword id="KW-0996">Nickel insertion</keyword>
<keyword id="KW-0547">Nucleotide-binding</keyword>
<sequence length="211" mass="23126">MRKYIKIGVAGPVGAGKTALIERLTREIASKYSVAVITNDIYTQEDAEFLTKNSLLPPERIMGVETGGCPHTAIREDASMNLEAVDEMVARFPEVELIFIESGGDNLSATFSPDLADVTIFVIDVAQGEKIPRKGGPGISRSDLLVINKTDLAPFVGADLSVMERDARRMRNGQPFIFTNLMKNENLDGVIGWIEKYALLKNIEDPASLVR</sequence>
<feature type="chain" id="PRO_0000067660" description="Urease accessory protein UreG">
    <location>
        <begin position="1"/>
        <end position="211"/>
    </location>
</feature>
<feature type="binding site" evidence="1">
    <location>
        <begin position="11"/>
        <end position="18"/>
    </location>
    <ligand>
        <name>GTP</name>
        <dbReference type="ChEBI" id="CHEBI:37565"/>
    </ligand>
</feature>
<evidence type="ECO:0000255" key="1">
    <source>
        <dbReference type="HAMAP-Rule" id="MF_01389"/>
    </source>
</evidence>
<reference key="1">
    <citation type="journal article" date="1997" name="Infect. Immun.">
        <title>Genetic and biochemical analyses of Actinobacillus pleuropneumoniae urease.</title>
        <authorList>
            <person name="Bosse J.T."/>
            <person name="Macinnes J.I."/>
        </authorList>
    </citation>
    <scope>NUCLEOTIDE SEQUENCE [GENOMIC DNA]</scope>
    <source>
        <strain>CM5 / Serotype 1</strain>
    </source>
</reference>
<dbReference type="EMBL" id="U89957">
    <property type="protein sequence ID" value="AAC00064.1"/>
    <property type="molecule type" value="Genomic_DNA"/>
</dbReference>
<dbReference type="RefSeq" id="WP_005598992.1">
    <property type="nucleotide sequence ID" value="NZ_JBHLVK010000010.1"/>
</dbReference>
<dbReference type="SMR" id="O54424"/>
<dbReference type="GeneID" id="48599898"/>
<dbReference type="GO" id="GO:0005737">
    <property type="term" value="C:cytoplasm"/>
    <property type="evidence" value="ECO:0007669"/>
    <property type="project" value="UniProtKB-SubCell"/>
</dbReference>
<dbReference type="GO" id="GO:0005525">
    <property type="term" value="F:GTP binding"/>
    <property type="evidence" value="ECO:0007669"/>
    <property type="project" value="UniProtKB-KW"/>
</dbReference>
<dbReference type="GO" id="GO:0003924">
    <property type="term" value="F:GTPase activity"/>
    <property type="evidence" value="ECO:0007669"/>
    <property type="project" value="InterPro"/>
</dbReference>
<dbReference type="GO" id="GO:0016151">
    <property type="term" value="F:nickel cation binding"/>
    <property type="evidence" value="ECO:0007669"/>
    <property type="project" value="UniProtKB-UniRule"/>
</dbReference>
<dbReference type="GO" id="GO:0043419">
    <property type="term" value="P:urea catabolic process"/>
    <property type="evidence" value="ECO:0007669"/>
    <property type="project" value="InterPro"/>
</dbReference>
<dbReference type="CDD" id="cd05540">
    <property type="entry name" value="UreG"/>
    <property type="match status" value="1"/>
</dbReference>
<dbReference type="FunFam" id="3.40.50.300:FF:000208">
    <property type="entry name" value="Urease accessory protein UreG"/>
    <property type="match status" value="1"/>
</dbReference>
<dbReference type="Gene3D" id="3.40.50.300">
    <property type="entry name" value="P-loop containing nucleotide triphosphate hydrolases"/>
    <property type="match status" value="1"/>
</dbReference>
<dbReference type="HAMAP" id="MF_01389">
    <property type="entry name" value="UreG"/>
    <property type="match status" value="1"/>
</dbReference>
<dbReference type="InterPro" id="IPR003495">
    <property type="entry name" value="CobW/HypB/UreG_nucleotide-bd"/>
</dbReference>
<dbReference type="InterPro" id="IPR027417">
    <property type="entry name" value="P-loop_NTPase"/>
</dbReference>
<dbReference type="InterPro" id="IPR004400">
    <property type="entry name" value="UreG"/>
</dbReference>
<dbReference type="NCBIfam" id="TIGR00101">
    <property type="entry name" value="ureG"/>
    <property type="match status" value="1"/>
</dbReference>
<dbReference type="PANTHER" id="PTHR31715">
    <property type="entry name" value="UREASE ACCESSORY PROTEIN G"/>
    <property type="match status" value="1"/>
</dbReference>
<dbReference type="PANTHER" id="PTHR31715:SF0">
    <property type="entry name" value="UREASE ACCESSORY PROTEIN G"/>
    <property type="match status" value="1"/>
</dbReference>
<dbReference type="Pfam" id="PF02492">
    <property type="entry name" value="cobW"/>
    <property type="match status" value="1"/>
</dbReference>
<dbReference type="PIRSF" id="PIRSF005624">
    <property type="entry name" value="Ni-bind_GTPase"/>
    <property type="match status" value="1"/>
</dbReference>
<dbReference type="SUPFAM" id="SSF52540">
    <property type="entry name" value="P-loop containing nucleoside triphosphate hydrolases"/>
    <property type="match status" value="1"/>
</dbReference>